<accession>P66731</accession>
<accession>Q97PA4</accession>
<evidence type="ECO:0000255" key="1">
    <source>
        <dbReference type="HAMAP-Rule" id="MF_00366"/>
    </source>
</evidence>
<evidence type="ECO:0000256" key="2">
    <source>
        <dbReference type="SAM" id="MobiDB-lite"/>
    </source>
</evidence>
<evidence type="ECO:0000305" key="3"/>
<comment type="function">
    <text evidence="1">Promotes RNA polymerase assembly. Latches the N- and C-terminal regions of the beta' subunit thereby facilitating its interaction with the beta and alpha subunits.</text>
</comment>
<comment type="catalytic activity">
    <reaction evidence="1">
        <text>RNA(n) + a ribonucleoside 5'-triphosphate = RNA(n+1) + diphosphate</text>
        <dbReference type="Rhea" id="RHEA:21248"/>
        <dbReference type="Rhea" id="RHEA-COMP:14527"/>
        <dbReference type="Rhea" id="RHEA-COMP:17342"/>
        <dbReference type="ChEBI" id="CHEBI:33019"/>
        <dbReference type="ChEBI" id="CHEBI:61557"/>
        <dbReference type="ChEBI" id="CHEBI:140395"/>
        <dbReference type="EC" id="2.7.7.6"/>
    </reaction>
</comment>
<comment type="subunit">
    <text evidence="1">The RNAP catalytic core consists of 2 alpha, 1 beta, 1 beta' and 1 omega subunit. When a sigma factor is associated with the core the holoenzyme is formed, which can initiate transcription.</text>
</comment>
<comment type="similarity">
    <text evidence="1">Belongs to the RNA polymerase subunit omega family.</text>
</comment>
<comment type="sequence caution" evidence="3">
    <conflict type="erroneous initiation">
        <sequence resource="EMBL-CDS" id="AAL00385"/>
    </conflict>
</comment>
<gene>
    <name evidence="1" type="primary">rpoZ</name>
    <name type="ordered locus">spr1582</name>
</gene>
<protein>
    <recommendedName>
        <fullName evidence="1">DNA-directed RNA polymerase subunit omega</fullName>
        <shortName evidence="1">RNAP omega subunit</shortName>
        <ecNumber evidence="1">2.7.7.6</ecNumber>
    </recommendedName>
    <alternativeName>
        <fullName evidence="1">RNA polymerase omega subunit</fullName>
    </alternativeName>
    <alternativeName>
        <fullName evidence="1">Transcriptase subunit omega</fullName>
    </alternativeName>
</protein>
<feature type="chain" id="PRO_0000128994" description="DNA-directed RNA polymerase subunit omega">
    <location>
        <begin position="1"/>
        <end position="103"/>
    </location>
</feature>
<feature type="region of interest" description="Disordered" evidence="2">
    <location>
        <begin position="52"/>
        <end position="103"/>
    </location>
</feature>
<feature type="compositionally biased region" description="Basic and acidic residues" evidence="2">
    <location>
        <begin position="62"/>
        <end position="103"/>
    </location>
</feature>
<name>RPOZ_STRR6</name>
<organism>
    <name type="scientific">Streptococcus pneumoniae (strain ATCC BAA-255 / R6)</name>
    <dbReference type="NCBI Taxonomy" id="171101"/>
    <lineage>
        <taxon>Bacteria</taxon>
        <taxon>Bacillati</taxon>
        <taxon>Bacillota</taxon>
        <taxon>Bacilli</taxon>
        <taxon>Lactobacillales</taxon>
        <taxon>Streptococcaceae</taxon>
        <taxon>Streptococcus</taxon>
    </lineage>
</organism>
<proteinExistence type="inferred from homology"/>
<sequence length="103" mass="11792">MLKPSIDTLLDKVPSKYSLVILEAKRAHELEAGAPATQGFKSEKSTLRALEEIESGNVTIHPDPEGKREAVRRRIEEEKRRKEEEEKKIKEQIAKEKEDGEKI</sequence>
<reference key="1">
    <citation type="journal article" date="2001" name="J. Bacteriol.">
        <title>Genome of the bacterium Streptococcus pneumoniae strain R6.</title>
        <authorList>
            <person name="Hoskins J."/>
            <person name="Alborn W.E. Jr."/>
            <person name="Arnold J."/>
            <person name="Blaszczak L.C."/>
            <person name="Burgett S."/>
            <person name="DeHoff B.S."/>
            <person name="Estrem S.T."/>
            <person name="Fritz L."/>
            <person name="Fu D.-J."/>
            <person name="Fuller W."/>
            <person name="Geringer C."/>
            <person name="Gilmour R."/>
            <person name="Glass J.S."/>
            <person name="Khoja H."/>
            <person name="Kraft A.R."/>
            <person name="Lagace R.E."/>
            <person name="LeBlanc D.J."/>
            <person name="Lee L.N."/>
            <person name="Lefkowitz E.J."/>
            <person name="Lu J."/>
            <person name="Matsushima P."/>
            <person name="McAhren S.M."/>
            <person name="McHenney M."/>
            <person name="McLeaster K."/>
            <person name="Mundy C.W."/>
            <person name="Nicas T.I."/>
            <person name="Norris F.H."/>
            <person name="O'Gara M."/>
            <person name="Peery R.B."/>
            <person name="Robertson G.T."/>
            <person name="Rockey P."/>
            <person name="Sun P.-M."/>
            <person name="Winkler M.E."/>
            <person name="Yang Y."/>
            <person name="Young-Bellido M."/>
            <person name="Zhao G."/>
            <person name="Zook C.A."/>
            <person name="Baltz R.H."/>
            <person name="Jaskunas S.R."/>
            <person name="Rosteck P.R. Jr."/>
            <person name="Skatrud P.L."/>
            <person name="Glass J.I."/>
        </authorList>
    </citation>
    <scope>NUCLEOTIDE SEQUENCE [LARGE SCALE GENOMIC DNA]</scope>
    <source>
        <strain>ATCC BAA-255 / R6</strain>
    </source>
</reference>
<keyword id="KW-0240">DNA-directed RNA polymerase</keyword>
<keyword id="KW-0548">Nucleotidyltransferase</keyword>
<keyword id="KW-1185">Reference proteome</keyword>
<keyword id="KW-0804">Transcription</keyword>
<keyword id="KW-0808">Transferase</keyword>
<dbReference type="EC" id="2.7.7.6" evidence="1"/>
<dbReference type="EMBL" id="AE007317">
    <property type="protein sequence ID" value="AAL00385.1"/>
    <property type="status" value="ALT_INIT"/>
    <property type="molecule type" value="Genomic_DNA"/>
</dbReference>
<dbReference type="PIR" id="D98069">
    <property type="entry name" value="D98069"/>
</dbReference>
<dbReference type="RefSeq" id="NP_359174.1">
    <property type="nucleotide sequence ID" value="NC_003098.1"/>
</dbReference>
<dbReference type="SMR" id="P66731"/>
<dbReference type="STRING" id="171101.spr1582"/>
<dbReference type="KEGG" id="spr:spr1582"/>
<dbReference type="PATRIC" id="fig|171101.6.peg.1709"/>
<dbReference type="eggNOG" id="COG1758">
    <property type="taxonomic scope" value="Bacteria"/>
</dbReference>
<dbReference type="HOGENOM" id="CLU_125406_0_0_9"/>
<dbReference type="Proteomes" id="UP000000586">
    <property type="component" value="Chromosome"/>
</dbReference>
<dbReference type="GO" id="GO:0000345">
    <property type="term" value="C:cytosolic DNA-directed RNA polymerase complex"/>
    <property type="evidence" value="ECO:0000318"/>
    <property type="project" value="GO_Central"/>
</dbReference>
<dbReference type="GO" id="GO:0001000">
    <property type="term" value="F:bacterial-type RNA polymerase core enzyme binding"/>
    <property type="evidence" value="ECO:0000318"/>
    <property type="project" value="GO_Central"/>
</dbReference>
<dbReference type="GO" id="GO:0003677">
    <property type="term" value="F:DNA binding"/>
    <property type="evidence" value="ECO:0007669"/>
    <property type="project" value="UniProtKB-UniRule"/>
</dbReference>
<dbReference type="GO" id="GO:0003899">
    <property type="term" value="F:DNA-directed RNA polymerase activity"/>
    <property type="evidence" value="ECO:0007669"/>
    <property type="project" value="UniProtKB-UniRule"/>
</dbReference>
<dbReference type="GO" id="GO:0006352">
    <property type="term" value="P:DNA-templated transcription initiation"/>
    <property type="evidence" value="ECO:0000318"/>
    <property type="project" value="GO_Central"/>
</dbReference>
<dbReference type="Gene3D" id="3.90.940.10">
    <property type="match status" value="1"/>
</dbReference>
<dbReference type="HAMAP" id="MF_00366">
    <property type="entry name" value="RNApol_bact_RpoZ"/>
    <property type="match status" value="1"/>
</dbReference>
<dbReference type="InterPro" id="IPR003716">
    <property type="entry name" value="DNA-dir_RNA_pol_omega"/>
</dbReference>
<dbReference type="InterPro" id="IPR006110">
    <property type="entry name" value="Pol_omega/Rpo6/RPB6"/>
</dbReference>
<dbReference type="InterPro" id="IPR036161">
    <property type="entry name" value="RPB6/omega-like_sf"/>
</dbReference>
<dbReference type="NCBIfam" id="TIGR00690">
    <property type="entry name" value="rpoZ"/>
    <property type="match status" value="1"/>
</dbReference>
<dbReference type="PANTHER" id="PTHR34476">
    <property type="entry name" value="DNA-DIRECTED RNA POLYMERASE SUBUNIT OMEGA"/>
    <property type="match status" value="1"/>
</dbReference>
<dbReference type="PANTHER" id="PTHR34476:SF1">
    <property type="entry name" value="DNA-DIRECTED RNA POLYMERASE SUBUNIT OMEGA"/>
    <property type="match status" value="1"/>
</dbReference>
<dbReference type="Pfam" id="PF01192">
    <property type="entry name" value="RNA_pol_Rpb6"/>
    <property type="match status" value="1"/>
</dbReference>
<dbReference type="SMART" id="SM01409">
    <property type="entry name" value="RNA_pol_Rpb6"/>
    <property type="match status" value="1"/>
</dbReference>
<dbReference type="SUPFAM" id="SSF63562">
    <property type="entry name" value="RPB6/omega subunit-like"/>
    <property type="match status" value="1"/>
</dbReference>